<gene>
    <name evidence="1" type="primary">rplX</name>
    <name type="ordered locus">HSM_1964</name>
</gene>
<feature type="chain" id="PRO_1000086483" description="Large ribosomal subunit protein uL24">
    <location>
        <begin position="1"/>
        <end position="103"/>
    </location>
</feature>
<accession>B0UX25</accession>
<sequence>MAAKIRQNDEVIVLAGKDKGKRGKVTKVLPNGKVFVEGVNIITKHEKPVPALGKAGGLVKKEAAIDVSNVAIFNPTTNKADRVGFRIEDGKKVRFFKSNNEII</sequence>
<keyword id="KW-0687">Ribonucleoprotein</keyword>
<keyword id="KW-0689">Ribosomal protein</keyword>
<keyword id="KW-0694">RNA-binding</keyword>
<keyword id="KW-0699">rRNA-binding</keyword>
<proteinExistence type="inferred from homology"/>
<organism>
    <name type="scientific">Histophilus somni (strain 2336)</name>
    <name type="common">Haemophilus somnus</name>
    <dbReference type="NCBI Taxonomy" id="228400"/>
    <lineage>
        <taxon>Bacteria</taxon>
        <taxon>Pseudomonadati</taxon>
        <taxon>Pseudomonadota</taxon>
        <taxon>Gammaproteobacteria</taxon>
        <taxon>Pasteurellales</taxon>
        <taxon>Pasteurellaceae</taxon>
        <taxon>Histophilus</taxon>
    </lineage>
</organism>
<reference key="1">
    <citation type="submission" date="2008-02" db="EMBL/GenBank/DDBJ databases">
        <title>Complete sequence of Haemophilus somnus 2336.</title>
        <authorList>
            <consortium name="US DOE Joint Genome Institute"/>
            <person name="Siddaramappa S."/>
            <person name="Duncan A.J."/>
            <person name="Challacombe J.F."/>
            <person name="Rainey D."/>
            <person name="Gillaspy A.F."/>
            <person name="Carson M."/>
            <person name="Gipson J."/>
            <person name="Gipson M."/>
            <person name="Bruce D."/>
            <person name="Detter J.C."/>
            <person name="Han C.S."/>
            <person name="Land M."/>
            <person name="Tapia R."/>
            <person name="Thompson L.S."/>
            <person name="Orvis J."/>
            <person name="Zaitshik J."/>
            <person name="Barnes G."/>
            <person name="Brettin T.S."/>
            <person name="Dyer D.W."/>
            <person name="Inzana T.J."/>
        </authorList>
    </citation>
    <scope>NUCLEOTIDE SEQUENCE [LARGE SCALE GENOMIC DNA]</scope>
    <source>
        <strain>2336</strain>
    </source>
</reference>
<name>RL24_HISS2</name>
<protein>
    <recommendedName>
        <fullName evidence="1">Large ribosomal subunit protein uL24</fullName>
    </recommendedName>
    <alternativeName>
        <fullName evidence="2">50S ribosomal protein L24</fullName>
    </alternativeName>
</protein>
<comment type="function">
    <text evidence="1">One of two assembly initiator proteins, it binds directly to the 5'-end of the 23S rRNA, where it nucleates assembly of the 50S subunit.</text>
</comment>
<comment type="function">
    <text evidence="1">One of the proteins that surrounds the polypeptide exit tunnel on the outside of the subunit.</text>
</comment>
<comment type="subunit">
    <text evidence="1">Part of the 50S ribosomal subunit.</text>
</comment>
<comment type="similarity">
    <text evidence="1">Belongs to the universal ribosomal protein uL24 family.</text>
</comment>
<evidence type="ECO:0000255" key="1">
    <source>
        <dbReference type="HAMAP-Rule" id="MF_01326"/>
    </source>
</evidence>
<evidence type="ECO:0000305" key="2"/>
<dbReference type="EMBL" id="CP000947">
    <property type="protein sequence ID" value="ACA31759.1"/>
    <property type="molecule type" value="Genomic_DNA"/>
</dbReference>
<dbReference type="RefSeq" id="WP_011608226.1">
    <property type="nucleotide sequence ID" value="NC_010519.1"/>
</dbReference>
<dbReference type="SMR" id="B0UX25"/>
<dbReference type="STRING" id="228400.HSM_1964"/>
<dbReference type="GeneID" id="31488275"/>
<dbReference type="KEGG" id="hsm:HSM_1964"/>
<dbReference type="HOGENOM" id="CLU_093315_2_2_6"/>
<dbReference type="GO" id="GO:1990904">
    <property type="term" value="C:ribonucleoprotein complex"/>
    <property type="evidence" value="ECO:0007669"/>
    <property type="project" value="UniProtKB-KW"/>
</dbReference>
<dbReference type="GO" id="GO:0005840">
    <property type="term" value="C:ribosome"/>
    <property type="evidence" value="ECO:0007669"/>
    <property type="project" value="UniProtKB-KW"/>
</dbReference>
<dbReference type="GO" id="GO:0019843">
    <property type="term" value="F:rRNA binding"/>
    <property type="evidence" value="ECO:0007669"/>
    <property type="project" value="UniProtKB-UniRule"/>
</dbReference>
<dbReference type="GO" id="GO:0003735">
    <property type="term" value="F:structural constituent of ribosome"/>
    <property type="evidence" value="ECO:0007669"/>
    <property type="project" value="InterPro"/>
</dbReference>
<dbReference type="GO" id="GO:0006412">
    <property type="term" value="P:translation"/>
    <property type="evidence" value="ECO:0007669"/>
    <property type="project" value="UniProtKB-UniRule"/>
</dbReference>
<dbReference type="CDD" id="cd06089">
    <property type="entry name" value="KOW_RPL26"/>
    <property type="match status" value="1"/>
</dbReference>
<dbReference type="FunFam" id="2.30.30.30:FF:000004">
    <property type="entry name" value="50S ribosomal protein L24"/>
    <property type="match status" value="1"/>
</dbReference>
<dbReference type="Gene3D" id="2.30.30.30">
    <property type="match status" value="1"/>
</dbReference>
<dbReference type="HAMAP" id="MF_01326_B">
    <property type="entry name" value="Ribosomal_uL24_B"/>
    <property type="match status" value="1"/>
</dbReference>
<dbReference type="InterPro" id="IPR005824">
    <property type="entry name" value="KOW"/>
</dbReference>
<dbReference type="InterPro" id="IPR014722">
    <property type="entry name" value="Rib_uL2_dom2"/>
</dbReference>
<dbReference type="InterPro" id="IPR003256">
    <property type="entry name" value="Ribosomal_uL24"/>
</dbReference>
<dbReference type="InterPro" id="IPR005825">
    <property type="entry name" value="Ribosomal_uL24_CS"/>
</dbReference>
<dbReference type="InterPro" id="IPR041988">
    <property type="entry name" value="Ribosomal_uL24_KOW"/>
</dbReference>
<dbReference type="InterPro" id="IPR008991">
    <property type="entry name" value="Translation_prot_SH3-like_sf"/>
</dbReference>
<dbReference type="NCBIfam" id="TIGR01079">
    <property type="entry name" value="rplX_bact"/>
    <property type="match status" value="1"/>
</dbReference>
<dbReference type="PANTHER" id="PTHR12903">
    <property type="entry name" value="MITOCHONDRIAL RIBOSOMAL PROTEIN L24"/>
    <property type="match status" value="1"/>
</dbReference>
<dbReference type="Pfam" id="PF00467">
    <property type="entry name" value="KOW"/>
    <property type="match status" value="1"/>
</dbReference>
<dbReference type="Pfam" id="PF17136">
    <property type="entry name" value="ribosomal_L24"/>
    <property type="match status" value="1"/>
</dbReference>
<dbReference type="SMART" id="SM00739">
    <property type="entry name" value="KOW"/>
    <property type="match status" value="1"/>
</dbReference>
<dbReference type="SUPFAM" id="SSF50104">
    <property type="entry name" value="Translation proteins SH3-like domain"/>
    <property type="match status" value="1"/>
</dbReference>
<dbReference type="PROSITE" id="PS01108">
    <property type="entry name" value="RIBOSOMAL_L24"/>
    <property type="match status" value="1"/>
</dbReference>